<sequence>MADNLVIVESPAKAKTIEKYLGKKYKVIASMGHVRDLPRSQMGVDTEDNYEPKYITIRGKGPVVKELKKHAKKAKNVFLASDPDREGEAIAWHLSKILELEDSKENRVVFNEITKDAVKESFKNPREIEMNLVDAQQARRILDRLVGYNISPVLWKKVKKGLSAGRVQSVALRLVIDRENEIRNFKPEEYWTIEGEFRYKKSKFNAKFLHYKNKPFKLKTKKDVEKITAALDGDQFEITNVTKKEKTRNPANPFTTSTLQQEAARKLNFKARKTMMVAQQLYEGIDLKKQGTIGLITYMRTDSTRISDTAKAEAKQYITDKYGESYTSKRKASGKQGDQDAHEAIRPSSTMRTPDDMKSFLTKDQYRLYKLIWERFVASQMAPAILDTVSLDITQGDIKFRANGQTIKFKGFMTLYVETKDDSDSEKENKLPKLEQGDKVTATQIEPAQHYTQPPPRYTEARLVKTLEELKIGRPSTYAPTIDTIQKRNYVKLESKRFVPTELGEIVHEQVKEYFPEIIDVEFTVNMETLLDKIAEGDITWRKVIDGFFSSFKQDVERAEEEMEKIEIKDEPAGEDCEVCGSPMVIKMGRYGKFMACSNFPDCRNTKAIVKSIGVKCPKCNDGDVVERKSKKNRVFYGCSKYPECDFISWDKPIGRDCPKCNQYLVENKKGKTTQVICSNCDYKEAAQK</sequence>
<accession>Q8NWZ9</accession>
<organism>
    <name type="scientific">Staphylococcus aureus (strain MW2)</name>
    <dbReference type="NCBI Taxonomy" id="196620"/>
    <lineage>
        <taxon>Bacteria</taxon>
        <taxon>Bacillati</taxon>
        <taxon>Bacillota</taxon>
        <taxon>Bacilli</taxon>
        <taxon>Bacillales</taxon>
        <taxon>Staphylococcaceae</taxon>
        <taxon>Staphylococcus</taxon>
    </lineage>
</organism>
<evidence type="ECO:0000255" key="1">
    <source>
        <dbReference type="HAMAP-Rule" id="MF_00952"/>
    </source>
</evidence>
<evidence type="ECO:0000255" key="2">
    <source>
        <dbReference type="PROSITE-ProRule" id="PRU01383"/>
    </source>
</evidence>
<evidence type="ECO:0000256" key="3">
    <source>
        <dbReference type="SAM" id="MobiDB-lite"/>
    </source>
</evidence>
<evidence type="ECO:0000305" key="4"/>
<proteinExistence type="inferred from homology"/>
<gene>
    <name evidence="1" type="primary">topA</name>
    <name type="ordered locus">MW1133</name>
</gene>
<dbReference type="EC" id="5.6.2.1" evidence="1"/>
<dbReference type="EMBL" id="BA000033">
    <property type="protein sequence ID" value="BAB94998.1"/>
    <property type="status" value="ALT_INIT"/>
    <property type="molecule type" value="Genomic_DNA"/>
</dbReference>
<dbReference type="SMR" id="Q8NWZ9"/>
<dbReference type="KEGG" id="sam:MW1133"/>
<dbReference type="HOGENOM" id="CLU_002929_4_3_9"/>
<dbReference type="GO" id="GO:0005694">
    <property type="term" value="C:chromosome"/>
    <property type="evidence" value="ECO:0007669"/>
    <property type="project" value="InterPro"/>
</dbReference>
<dbReference type="GO" id="GO:0003677">
    <property type="term" value="F:DNA binding"/>
    <property type="evidence" value="ECO:0007669"/>
    <property type="project" value="UniProtKB-KW"/>
</dbReference>
<dbReference type="GO" id="GO:0003917">
    <property type="term" value="F:DNA topoisomerase type I (single strand cut, ATP-independent) activity"/>
    <property type="evidence" value="ECO:0007669"/>
    <property type="project" value="UniProtKB-UniRule"/>
</dbReference>
<dbReference type="GO" id="GO:0008270">
    <property type="term" value="F:zinc ion binding"/>
    <property type="evidence" value="ECO:0007669"/>
    <property type="project" value="UniProtKB-KW"/>
</dbReference>
<dbReference type="GO" id="GO:0006265">
    <property type="term" value="P:DNA topological change"/>
    <property type="evidence" value="ECO:0007669"/>
    <property type="project" value="UniProtKB-UniRule"/>
</dbReference>
<dbReference type="CDD" id="cd00186">
    <property type="entry name" value="TOP1Ac"/>
    <property type="match status" value="1"/>
</dbReference>
<dbReference type="CDD" id="cd03363">
    <property type="entry name" value="TOPRIM_TopoIA_TopoI"/>
    <property type="match status" value="1"/>
</dbReference>
<dbReference type="Gene3D" id="3.40.50.140">
    <property type="match status" value="1"/>
</dbReference>
<dbReference type="Gene3D" id="3.30.65.10">
    <property type="entry name" value="Bacterial Topoisomerase I, domain 1"/>
    <property type="match status" value="2"/>
</dbReference>
<dbReference type="Gene3D" id="1.10.460.10">
    <property type="entry name" value="Topoisomerase I, domain 2"/>
    <property type="match status" value="1"/>
</dbReference>
<dbReference type="Gene3D" id="2.70.20.10">
    <property type="entry name" value="Topoisomerase I, domain 3"/>
    <property type="match status" value="1"/>
</dbReference>
<dbReference type="Gene3D" id="1.10.290.10">
    <property type="entry name" value="Topoisomerase I, domain 4"/>
    <property type="match status" value="1"/>
</dbReference>
<dbReference type="HAMAP" id="MF_00952">
    <property type="entry name" value="Topoisom_1_prok"/>
    <property type="match status" value="1"/>
</dbReference>
<dbReference type="InterPro" id="IPR000380">
    <property type="entry name" value="Topo_IA"/>
</dbReference>
<dbReference type="InterPro" id="IPR003601">
    <property type="entry name" value="Topo_IA_2"/>
</dbReference>
<dbReference type="InterPro" id="IPR023406">
    <property type="entry name" value="Topo_IA_AS"/>
</dbReference>
<dbReference type="InterPro" id="IPR013497">
    <property type="entry name" value="Topo_IA_cen"/>
</dbReference>
<dbReference type="InterPro" id="IPR013824">
    <property type="entry name" value="Topo_IA_cen_sub1"/>
</dbReference>
<dbReference type="InterPro" id="IPR013825">
    <property type="entry name" value="Topo_IA_cen_sub2"/>
</dbReference>
<dbReference type="InterPro" id="IPR013826">
    <property type="entry name" value="Topo_IA_cen_sub3"/>
</dbReference>
<dbReference type="InterPro" id="IPR023405">
    <property type="entry name" value="Topo_IA_core_domain"/>
</dbReference>
<dbReference type="InterPro" id="IPR003602">
    <property type="entry name" value="Topo_IA_DNA-bd_dom"/>
</dbReference>
<dbReference type="InterPro" id="IPR013498">
    <property type="entry name" value="Topo_IA_Znf"/>
</dbReference>
<dbReference type="InterPro" id="IPR005733">
    <property type="entry name" value="TopoI_bac-type"/>
</dbReference>
<dbReference type="InterPro" id="IPR028612">
    <property type="entry name" value="Topoisom_1_IA"/>
</dbReference>
<dbReference type="InterPro" id="IPR006171">
    <property type="entry name" value="TOPRIM_dom"/>
</dbReference>
<dbReference type="InterPro" id="IPR034149">
    <property type="entry name" value="TOPRIM_TopoI"/>
</dbReference>
<dbReference type="NCBIfam" id="TIGR01051">
    <property type="entry name" value="topA_bact"/>
    <property type="match status" value="1"/>
</dbReference>
<dbReference type="PANTHER" id="PTHR42785:SF1">
    <property type="entry name" value="DNA TOPOISOMERASE"/>
    <property type="match status" value="1"/>
</dbReference>
<dbReference type="PANTHER" id="PTHR42785">
    <property type="entry name" value="DNA TOPOISOMERASE, TYPE IA, CORE"/>
    <property type="match status" value="1"/>
</dbReference>
<dbReference type="Pfam" id="PF01131">
    <property type="entry name" value="Topoisom_bac"/>
    <property type="match status" value="1"/>
</dbReference>
<dbReference type="Pfam" id="PF01751">
    <property type="entry name" value="Toprim"/>
    <property type="match status" value="1"/>
</dbReference>
<dbReference type="Pfam" id="PF01396">
    <property type="entry name" value="Zn_ribbon_Top1"/>
    <property type="match status" value="3"/>
</dbReference>
<dbReference type="PRINTS" id="PR00417">
    <property type="entry name" value="PRTPISMRASEI"/>
</dbReference>
<dbReference type="SMART" id="SM00437">
    <property type="entry name" value="TOP1Ac"/>
    <property type="match status" value="1"/>
</dbReference>
<dbReference type="SMART" id="SM00436">
    <property type="entry name" value="TOP1Bc"/>
    <property type="match status" value="1"/>
</dbReference>
<dbReference type="SMART" id="SM00493">
    <property type="entry name" value="TOPRIM"/>
    <property type="match status" value="1"/>
</dbReference>
<dbReference type="SUPFAM" id="SSF56712">
    <property type="entry name" value="Prokaryotic type I DNA topoisomerase"/>
    <property type="match status" value="1"/>
</dbReference>
<dbReference type="PROSITE" id="PS00396">
    <property type="entry name" value="TOPO_IA_1"/>
    <property type="match status" value="1"/>
</dbReference>
<dbReference type="PROSITE" id="PS52039">
    <property type="entry name" value="TOPO_IA_2"/>
    <property type="match status" value="1"/>
</dbReference>
<dbReference type="PROSITE" id="PS50880">
    <property type="entry name" value="TOPRIM"/>
    <property type="match status" value="1"/>
</dbReference>
<protein>
    <recommendedName>
        <fullName evidence="1">DNA topoisomerase 1</fullName>
        <ecNumber evidence="1">5.6.2.1</ecNumber>
    </recommendedName>
    <alternativeName>
        <fullName evidence="1">DNA topoisomerase I</fullName>
    </alternativeName>
    <alternativeName>
        <fullName>Omega-protein</fullName>
    </alternativeName>
    <alternativeName>
        <fullName>Relaxing enzyme</fullName>
    </alternativeName>
    <alternativeName>
        <fullName>Swivelase</fullName>
    </alternativeName>
    <alternativeName>
        <fullName>Untwisting enzyme</fullName>
    </alternativeName>
</protein>
<reference key="1">
    <citation type="journal article" date="2002" name="Lancet">
        <title>Genome and virulence determinants of high virulence community-acquired MRSA.</title>
        <authorList>
            <person name="Baba T."/>
            <person name="Takeuchi F."/>
            <person name="Kuroda M."/>
            <person name="Yuzawa H."/>
            <person name="Aoki K."/>
            <person name="Oguchi A."/>
            <person name="Nagai Y."/>
            <person name="Iwama N."/>
            <person name="Asano K."/>
            <person name="Naimi T."/>
            <person name="Kuroda H."/>
            <person name="Cui L."/>
            <person name="Yamamoto K."/>
            <person name="Hiramatsu K."/>
        </authorList>
    </citation>
    <scope>NUCLEOTIDE SEQUENCE [LARGE SCALE GENOMIC DNA]</scope>
    <source>
        <strain>MW2</strain>
    </source>
</reference>
<comment type="function">
    <text evidence="1">Releases the supercoiling and torsional tension of DNA, which is introduced during the DNA replication and transcription, by transiently cleaving and rejoining one strand of the DNA duplex. Introduces a single-strand break via transesterification at a target site in duplex DNA. The scissile phosphodiester is attacked by the catalytic tyrosine of the enzyme, resulting in the formation of a DNA-(5'-phosphotyrosyl)-enzyme intermediate and the expulsion of a 3'-OH DNA strand. The free DNA strand then undergoes passage around the unbroken strand, thus removing DNA supercoils. Finally, in the religation step, the DNA 3'-OH attacks the covalent intermediate to expel the active-site tyrosine and restore the DNA phosphodiester backbone.</text>
</comment>
<comment type="catalytic activity">
    <reaction evidence="1">
        <text>ATP-independent breakage of single-stranded DNA, followed by passage and rejoining.</text>
        <dbReference type="EC" id="5.6.2.1"/>
    </reaction>
</comment>
<comment type="cofactor">
    <cofactor evidence="1">
        <name>Mg(2+)</name>
        <dbReference type="ChEBI" id="CHEBI:18420"/>
    </cofactor>
</comment>
<comment type="subunit">
    <text evidence="1">Monomer.</text>
</comment>
<comment type="similarity">
    <text evidence="1">Belongs to the type IA topoisomerase family.</text>
</comment>
<comment type="sequence caution" evidence="4">
    <conflict type="erroneous initiation">
        <sequence resource="EMBL-CDS" id="BAB94998"/>
    </conflict>
</comment>
<name>TOP1_STAAW</name>
<keyword id="KW-0238">DNA-binding</keyword>
<keyword id="KW-0413">Isomerase</keyword>
<keyword id="KW-0460">Magnesium</keyword>
<keyword id="KW-0479">Metal-binding</keyword>
<keyword id="KW-0677">Repeat</keyword>
<keyword id="KW-0799">Topoisomerase</keyword>
<keyword id="KW-0862">Zinc</keyword>
<keyword id="KW-0863">Zinc-finger</keyword>
<feature type="chain" id="PRO_0000285940" description="DNA topoisomerase 1">
    <location>
        <begin position="1"/>
        <end position="689"/>
    </location>
</feature>
<feature type="domain" description="Toprim" evidence="1">
    <location>
        <begin position="3"/>
        <end position="113"/>
    </location>
</feature>
<feature type="domain" description="Topo IA-type catalytic" evidence="2">
    <location>
        <begin position="129"/>
        <end position="557"/>
    </location>
</feature>
<feature type="zinc finger region" description="C4-type 1">
    <location>
        <begin position="577"/>
        <end position="603"/>
    </location>
</feature>
<feature type="zinc finger region" description="C4-type 2">
    <location>
        <begin position="617"/>
        <end position="645"/>
    </location>
</feature>
<feature type="zinc finger region" description="C4-type 3">
    <location>
        <begin position="658"/>
        <end position="681"/>
    </location>
</feature>
<feature type="region of interest" description="Interaction with DNA" evidence="1">
    <location>
        <begin position="163"/>
        <end position="168"/>
    </location>
</feature>
<feature type="region of interest" description="Disordered" evidence="3">
    <location>
        <begin position="328"/>
        <end position="357"/>
    </location>
</feature>
<feature type="active site" description="O-(5'-phospho-DNA)-tyrosine intermediate" evidence="2">
    <location>
        <position position="298"/>
    </location>
</feature>
<feature type="binding site" evidence="1">
    <location>
        <position position="9"/>
    </location>
    <ligand>
        <name>Mg(2+)</name>
        <dbReference type="ChEBI" id="CHEBI:18420"/>
        <note>catalytic</note>
    </ligand>
</feature>
<feature type="binding site" evidence="1">
    <location>
        <position position="82"/>
    </location>
    <ligand>
        <name>Mg(2+)</name>
        <dbReference type="ChEBI" id="CHEBI:18420"/>
        <note>catalytic</note>
    </ligand>
</feature>
<feature type="site" description="Interaction with DNA" evidence="1">
    <location>
        <position position="33"/>
    </location>
</feature>
<feature type="site" description="Interaction with DNA" evidence="1">
    <location>
        <position position="139"/>
    </location>
</feature>
<feature type="site" description="Interaction with DNA" evidence="1">
    <location>
        <position position="140"/>
    </location>
</feature>
<feature type="site" description="Interaction with DNA" evidence="1">
    <location>
        <position position="143"/>
    </location>
</feature>
<feature type="site" description="Interaction with DNA" evidence="1">
    <location>
        <position position="148"/>
    </location>
</feature>
<feature type="site" description="Interaction with DNA" evidence="1">
    <location>
        <position position="155"/>
    </location>
</feature>
<feature type="site" description="Interaction with DNA" evidence="1">
    <location>
        <position position="300"/>
    </location>
</feature>
<feature type="site" description="Interaction with DNA" evidence="1">
    <location>
        <position position="488"/>
    </location>
</feature>